<accession>Q1IJ49</accession>
<gene>
    <name evidence="2" type="primary">ahpD</name>
    <name type="ordered locus">Acid345_4101</name>
</gene>
<name>AHPD_KORVE</name>
<evidence type="ECO:0000250" key="1"/>
<evidence type="ECO:0000255" key="2">
    <source>
        <dbReference type="HAMAP-Rule" id="MF_01676"/>
    </source>
</evidence>
<protein>
    <recommendedName>
        <fullName evidence="2">Alkyl hydroperoxide reductase AhpD</fullName>
        <ecNumber evidence="2">1.11.1.28</ecNumber>
    </recommendedName>
    <alternativeName>
        <fullName evidence="2">Alkylhydroperoxidase AhpD</fullName>
    </alternativeName>
</protein>
<organism>
    <name type="scientific">Koribacter versatilis (strain Ellin345)</name>
    <dbReference type="NCBI Taxonomy" id="204669"/>
    <lineage>
        <taxon>Bacteria</taxon>
        <taxon>Pseudomonadati</taxon>
        <taxon>Acidobacteriota</taxon>
        <taxon>Terriglobia</taxon>
        <taxon>Terriglobales</taxon>
        <taxon>Candidatus Korobacteraceae</taxon>
        <taxon>Candidatus Korobacter</taxon>
    </lineage>
</organism>
<dbReference type="EC" id="1.11.1.28" evidence="2"/>
<dbReference type="EMBL" id="CP000360">
    <property type="protein sequence ID" value="ABF43101.1"/>
    <property type="molecule type" value="Genomic_DNA"/>
</dbReference>
<dbReference type="RefSeq" id="WP_011524900.1">
    <property type="nucleotide sequence ID" value="NC_008009.1"/>
</dbReference>
<dbReference type="SMR" id="Q1IJ49"/>
<dbReference type="STRING" id="204669.Acid345_4101"/>
<dbReference type="PeroxiBase" id="4636">
    <property type="entry name" value="AbacAhpD"/>
</dbReference>
<dbReference type="EnsemblBacteria" id="ABF43101">
    <property type="protein sequence ID" value="ABF43101"/>
    <property type="gene ID" value="Acid345_4101"/>
</dbReference>
<dbReference type="KEGG" id="aba:Acid345_4101"/>
<dbReference type="eggNOG" id="COG2128">
    <property type="taxonomic scope" value="Bacteria"/>
</dbReference>
<dbReference type="HOGENOM" id="CLU_105328_0_0_0"/>
<dbReference type="OrthoDB" id="9801997at2"/>
<dbReference type="Proteomes" id="UP000002432">
    <property type="component" value="Chromosome"/>
</dbReference>
<dbReference type="GO" id="GO:0008785">
    <property type="term" value="F:alkyl hydroperoxide reductase activity"/>
    <property type="evidence" value="ECO:0007669"/>
    <property type="project" value="UniProtKB-UniRule"/>
</dbReference>
<dbReference type="GO" id="GO:0015036">
    <property type="term" value="F:disulfide oxidoreductase activity"/>
    <property type="evidence" value="ECO:0007669"/>
    <property type="project" value="TreeGrafter"/>
</dbReference>
<dbReference type="GO" id="GO:0032843">
    <property type="term" value="F:hydroperoxide reductase activity"/>
    <property type="evidence" value="ECO:0007669"/>
    <property type="project" value="InterPro"/>
</dbReference>
<dbReference type="GO" id="GO:0051920">
    <property type="term" value="F:peroxiredoxin activity"/>
    <property type="evidence" value="ECO:0007669"/>
    <property type="project" value="InterPro"/>
</dbReference>
<dbReference type="GO" id="GO:0045454">
    <property type="term" value="P:cell redox homeostasis"/>
    <property type="evidence" value="ECO:0007669"/>
    <property type="project" value="TreeGrafter"/>
</dbReference>
<dbReference type="GO" id="GO:0006979">
    <property type="term" value="P:response to oxidative stress"/>
    <property type="evidence" value="ECO:0007669"/>
    <property type="project" value="InterPro"/>
</dbReference>
<dbReference type="Gene3D" id="1.20.1290.10">
    <property type="entry name" value="AhpD-like"/>
    <property type="match status" value="1"/>
</dbReference>
<dbReference type="HAMAP" id="MF_01676">
    <property type="entry name" value="AhpD"/>
    <property type="match status" value="1"/>
</dbReference>
<dbReference type="InterPro" id="IPR004674">
    <property type="entry name" value="AhpD"/>
</dbReference>
<dbReference type="InterPro" id="IPR029032">
    <property type="entry name" value="AhpD-like"/>
</dbReference>
<dbReference type="InterPro" id="IPR004675">
    <property type="entry name" value="AhpD_core"/>
</dbReference>
<dbReference type="InterPro" id="IPR003779">
    <property type="entry name" value="CMD-like"/>
</dbReference>
<dbReference type="NCBIfam" id="TIGR00777">
    <property type="entry name" value="ahpD"/>
    <property type="match status" value="1"/>
</dbReference>
<dbReference type="NCBIfam" id="TIGR00778">
    <property type="entry name" value="ahpD_dom"/>
    <property type="match status" value="1"/>
</dbReference>
<dbReference type="PANTHER" id="PTHR33930">
    <property type="entry name" value="ALKYL HYDROPEROXIDE REDUCTASE AHPD"/>
    <property type="match status" value="1"/>
</dbReference>
<dbReference type="PANTHER" id="PTHR33930:SF7">
    <property type="entry name" value="ALKYL HYDROPEROXIDE REDUCTASE AHPD"/>
    <property type="match status" value="1"/>
</dbReference>
<dbReference type="Pfam" id="PF02627">
    <property type="entry name" value="CMD"/>
    <property type="match status" value="1"/>
</dbReference>
<dbReference type="SUPFAM" id="SSF69118">
    <property type="entry name" value="AhpD-like"/>
    <property type="match status" value="1"/>
</dbReference>
<comment type="function">
    <text evidence="2">Antioxidant protein with alkyl hydroperoxidase activity. Required for the reduction of the AhpC active site cysteine residues and for the regeneration of the AhpC enzyme activity.</text>
</comment>
<comment type="catalytic activity">
    <reaction evidence="2">
        <text>N(6)-[(R)-dihydrolipoyl]-L-lysyl-[lipoyl-carrier protein] + a hydroperoxide = N(6)-[(R)-lipoyl]-L-lysyl-[lipoyl-carrier protein] + an alcohol + H2O</text>
        <dbReference type="Rhea" id="RHEA:62636"/>
        <dbReference type="Rhea" id="RHEA-COMP:10502"/>
        <dbReference type="Rhea" id="RHEA-COMP:16355"/>
        <dbReference type="ChEBI" id="CHEBI:15377"/>
        <dbReference type="ChEBI" id="CHEBI:30879"/>
        <dbReference type="ChEBI" id="CHEBI:35924"/>
        <dbReference type="ChEBI" id="CHEBI:83099"/>
        <dbReference type="ChEBI" id="CHEBI:83100"/>
        <dbReference type="EC" id="1.11.1.28"/>
    </reaction>
</comment>
<comment type="similarity">
    <text evidence="2">Belongs to the AhpD family.</text>
</comment>
<keyword id="KW-0049">Antioxidant</keyword>
<keyword id="KW-1015">Disulfide bond</keyword>
<keyword id="KW-0560">Oxidoreductase</keyword>
<keyword id="KW-0575">Peroxidase</keyword>
<keyword id="KW-0676">Redox-active center</keyword>
<keyword id="KW-1185">Reference proteome</keyword>
<sequence>MNLEALLDTVPAYARDLKLNFSAVVRQNTELTEQQLWGTVVACAAASRNRTLLDAIVEEAKGKLSAQAVEAAKGAAAILSMNNIFYRFQHLAVNKKYETMRAGLRMNFLRQHGVDPLDFELWALAVSAVNGCGKCIDAHERVLLQKEFSEEKILAAIRVASTIYGLAVVFDAEEPKGDLVGAPVNTDAYSTTTI</sequence>
<proteinExistence type="inferred from homology"/>
<feature type="chain" id="PRO_0000359467" description="Alkyl hydroperoxide reductase AhpD">
    <location>
        <begin position="1"/>
        <end position="194"/>
    </location>
</feature>
<feature type="active site" description="Proton donor" evidence="2">
    <location>
        <position position="132"/>
    </location>
</feature>
<feature type="active site" description="Cysteine sulfenic acid (-SOH) intermediate" evidence="2">
    <location>
        <position position="135"/>
    </location>
</feature>
<feature type="disulfide bond" evidence="1">
    <location>
        <begin position="132"/>
        <end position="135"/>
    </location>
</feature>
<feature type="disulfide bond" description="Interchain (with AhpC); in linked form" evidence="2">
    <location>
        <position position="135"/>
    </location>
</feature>
<reference key="1">
    <citation type="journal article" date="2009" name="Appl. Environ. Microbiol.">
        <title>Three genomes from the phylum Acidobacteria provide insight into the lifestyles of these microorganisms in soils.</title>
        <authorList>
            <person name="Ward N.L."/>
            <person name="Challacombe J.F."/>
            <person name="Janssen P.H."/>
            <person name="Henrissat B."/>
            <person name="Coutinho P.M."/>
            <person name="Wu M."/>
            <person name="Xie G."/>
            <person name="Haft D.H."/>
            <person name="Sait M."/>
            <person name="Badger J."/>
            <person name="Barabote R.D."/>
            <person name="Bradley B."/>
            <person name="Brettin T.S."/>
            <person name="Brinkac L.M."/>
            <person name="Bruce D."/>
            <person name="Creasy T."/>
            <person name="Daugherty S.C."/>
            <person name="Davidsen T.M."/>
            <person name="DeBoy R.T."/>
            <person name="Detter J.C."/>
            <person name="Dodson R.J."/>
            <person name="Durkin A.S."/>
            <person name="Ganapathy A."/>
            <person name="Gwinn-Giglio M."/>
            <person name="Han C.S."/>
            <person name="Khouri H."/>
            <person name="Kiss H."/>
            <person name="Kothari S.P."/>
            <person name="Madupu R."/>
            <person name="Nelson K.E."/>
            <person name="Nelson W.C."/>
            <person name="Paulsen I."/>
            <person name="Penn K."/>
            <person name="Ren Q."/>
            <person name="Rosovitz M.J."/>
            <person name="Selengut J.D."/>
            <person name="Shrivastava S."/>
            <person name="Sullivan S.A."/>
            <person name="Tapia R."/>
            <person name="Thompson L.S."/>
            <person name="Watkins K.L."/>
            <person name="Yang Q."/>
            <person name="Yu C."/>
            <person name="Zafar N."/>
            <person name="Zhou L."/>
            <person name="Kuske C.R."/>
        </authorList>
    </citation>
    <scope>NUCLEOTIDE SEQUENCE [LARGE SCALE GENOMIC DNA]</scope>
    <source>
        <strain>Ellin345</strain>
    </source>
</reference>